<accession>A0A0B5ADU4</accession>
<reference key="1">
    <citation type="journal article" date="2015" name="Proc. Natl. Acad. Sci. U.S.A.">
        <title>Specialized insulin is used for chemical warfare by fish-hunting cone snails.</title>
        <authorList>
            <person name="Safavi-Hemami H."/>
            <person name="Gajewiak J."/>
            <person name="Karanth S."/>
            <person name="Robinson S.D."/>
            <person name="Ueberheide B."/>
            <person name="Douglass A.D."/>
            <person name="Schlegel A."/>
            <person name="Imperial J.S."/>
            <person name="Watkins M."/>
            <person name="Bandyopadhyay P.K."/>
            <person name="Yandell M."/>
            <person name="Li Q."/>
            <person name="Purcell A.W."/>
            <person name="Norton R.S."/>
            <person name="Ellgaard L."/>
            <person name="Olivera B.M."/>
        </authorList>
    </citation>
    <scope>NUCLEOTIDE SEQUENCE [MRNA]</scope>
    <source>
        <tissue>Venom gland</tissue>
    </source>
</reference>
<reference key="2">
    <citation type="journal article" date="2019" name="Elife">
        <title>Fish-hunting cone snail venoms are a rich source of minimized ligands of the vertebrate insulin receptor.</title>
        <authorList>
            <person name="Ahorukomeye P."/>
            <person name="Disotuar M.M."/>
            <person name="Gajewiak J."/>
            <person name="Karanth S."/>
            <person name="Watkins M."/>
            <person name="Robinson S.D."/>
            <person name="Florez Salcedo P."/>
            <person name="Smith N.A."/>
            <person name="Smith B.J."/>
            <person name="Schlegel A."/>
            <person name="Forbes B.E."/>
            <person name="Olivera B."/>
            <person name="Hung-Chieh Chou D."/>
            <person name="Safavi-Hemami H."/>
        </authorList>
    </citation>
    <scope>FUNCTION</scope>
    <scope>SYNTHESIS OF 30-52 AND 95-114</scope>
    <scope>3D-STRUCTURE MODELING IN COMPLEX WITH HUMAN INSULIN RECEPTOR</scope>
</reference>
<evidence type="ECO:0000250" key="1">
    <source>
        <dbReference type="UniProtKB" id="A0A0B5AC95"/>
    </source>
</evidence>
<evidence type="ECO:0000255" key="2"/>
<evidence type="ECO:0000269" key="3">
    <source>
    </source>
</evidence>
<evidence type="ECO:0000303" key="4">
    <source>
    </source>
</evidence>
<evidence type="ECO:0000303" key="5">
    <source>
    </source>
</evidence>
<evidence type="ECO:0000305" key="6">
    <source>
    </source>
</evidence>
<evidence type="ECO:0000305" key="7">
    <source>
    </source>
</evidence>
<evidence type="ECO:0000312" key="8">
    <source>
        <dbReference type="EMBL" id="AJD85833.1"/>
    </source>
</evidence>
<protein>
    <recommendedName>
        <fullName evidence="5">Con-Ins T1A</fullName>
    </recommendedName>
    <alternativeName>
        <fullName evidence="4">Con-Ins T1</fullName>
    </alternativeName>
    <alternativeName>
        <fullName evidence="8">Insulin 1</fullName>
    </alternativeName>
    <component>
        <recommendedName>
            <fullName evidence="5">Con-Ins T1A B chain</fullName>
        </recommendedName>
        <alternativeName>
            <fullName evidence="4">Con-Ins T1 B chain</fullName>
        </alternativeName>
    </component>
    <component>
        <recommendedName>
            <fullName evidence="5">Con-Ins T1A A chain</fullName>
        </recommendedName>
        <alternativeName>
            <fullName evidence="4">Con-Ins T1 A chain</fullName>
        </alternativeName>
    </component>
</protein>
<sequence>MTTSFYFLLMALGLLLYVCQSSFGNQHTRNSDTPKYRCGSEIPNSYIDLCFRKRNDAGKKRGRASPLWQRGGSLSMLKARAKRNEAFHLQRAHRGVVEHCCHRPCSNAEFKKFCG</sequence>
<name>INS1A_CONTU</name>
<organism>
    <name type="scientific">Conus tulipa</name>
    <name type="common">Fish-hunting cone snail</name>
    <name type="synonym">Tulip cone</name>
    <dbReference type="NCBI Taxonomy" id="6495"/>
    <lineage>
        <taxon>Eukaryota</taxon>
        <taxon>Metazoa</taxon>
        <taxon>Spiralia</taxon>
        <taxon>Lophotrochozoa</taxon>
        <taxon>Mollusca</taxon>
        <taxon>Gastropoda</taxon>
        <taxon>Caenogastropoda</taxon>
        <taxon>Neogastropoda</taxon>
        <taxon>Conoidea</taxon>
        <taxon>Conidae</taxon>
        <taxon>Conus</taxon>
        <taxon>Gastridium</taxon>
    </lineage>
</organism>
<comment type="function">
    <text evidence="1 3">This venom insulin, from a fish-hunting cone snail, facilitates prey capture by rapidly inducing hypoglycemic shock (PubMed:30747102). It is one of the smallest known insulin found in nature and lacks the C-terminal segment of the B chain that, in human insulin, mediates engagement of the insulin receptor (INSR) and assembly of the hormone's hexameric storage form (By similarity). Despite lacking this segment, it both binds and activates human insulin receptor (long isoform (HIR-B)) with a high potency (EC(50)=12.0 nM) (PubMed:30747102). In vivo, intraperitoneal injection of this peptide into zebrafish lowers blood glucose with a lower potency than human insulin (PubMed:30747102). In addition, when applied to water, this peptide reduces overall locomotor activity of zebrafish larvae, observed as a significant decrease in the percentage of time spent swimming and movement frequency (By similarity). When tested on a mouse model of diabetes, this insulin also lowers blood glucose with a 10-fold lower potency than human insulin (PubMed:30747102).</text>
</comment>
<comment type="subunit">
    <text evidence="1">Heterodimer of A and B chains; disulfide-linked.</text>
</comment>
<comment type="subcellular location">
    <subcellularLocation>
        <location evidence="1">Secreted</location>
    </subcellularLocation>
</comment>
<comment type="tissue specificity">
    <text evidence="6">Expressed by the venom gland.</text>
</comment>
<comment type="miscellaneous">
    <text evidence="7">Is possibly an allelic variant of Con-Ins T1B (AC A0A0B5AC90).</text>
</comment>
<comment type="similarity">
    <text>Belongs to the insulin family.</text>
</comment>
<keyword id="KW-0027">Amidation</keyword>
<keyword id="KW-0119">Carbohydrate metabolism</keyword>
<keyword id="KW-0165">Cleavage on pair of basic residues</keyword>
<keyword id="KW-1015">Disulfide bond</keyword>
<keyword id="KW-0301">Gamma-carboxyglutamic acid</keyword>
<keyword id="KW-0313">Glucose metabolism</keyword>
<keyword id="KW-0372">Hormone</keyword>
<keyword id="KW-0379">Hydroxylation</keyword>
<keyword id="KW-0964">Secreted</keyword>
<keyword id="KW-0732">Signal</keyword>
<keyword id="KW-0800">Toxin</keyword>
<proteinExistence type="inferred from homology"/>
<feature type="signal peptide" evidence="2">
    <location>
        <begin position="1"/>
        <end position="24"/>
    </location>
</feature>
<feature type="propeptide" id="PRO_0000439300" evidence="1">
    <location>
        <begin position="25"/>
        <end position="29"/>
    </location>
</feature>
<feature type="peptide" id="PRO_5002098295" description="Con-Ins T1A B chain" evidence="1">
    <location>
        <begin position="30"/>
        <end position="52"/>
    </location>
</feature>
<feature type="propeptide" id="PRO_0000439301" description="C peptide" evidence="1">
    <location>
        <begin position="53"/>
        <end position="94"/>
    </location>
</feature>
<feature type="peptide" id="PRO_0000439302" description="Con-Ins T1A A chain" evidence="1">
    <location>
        <begin position="95"/>
        <end position="114"/>
    </location>
</feature>
<feature type="modified residue" description="4-hydroxyproline; partial" evidence="1">
    <location>
        <position position="34"/>
    </location>
</feature>
<feature type="modified residue" description="4-carboxyglutamate" evidence="1">
    <location>
        <position position="41"/>
    </location>
</feature>
<feature type="modified residue" description="4-carboxyglutamate" evidence="1">
    <location>
        <position position="98"/>
    </location>
</feature>
<feature type="modified residue" description="4-hydroxyproline; partial" evidence="1">
    <location>
        <position position="104"/>
    </location>
</feature>
<feature type="modified residue" description="4-carboxyglutamate; partial" evidence="1">
    <location>
        <position position="109"/>
    </location>
</feature>
<feature type="modified residue" description="Cysteine amide" evidence="1">
    <location>
        <position position="114"/>
    </location>
</feature>
<feature type="disulfide bond" description="Interchain (between B and A chains)" evidence="1">
    <location>
        <begin position="38"/>
        <end position="101"/>
    </location>
</feature>
<feature type="disulfide bond" description="Interchain (between B and A chains)" evidence="1">
    <location>
        <begin position="50"/>
        <end position="114"/>
    </location>
</feature>
<feature type="disulfide bond" evidence="1">
    <location>
        <begin position="100"/>
        <end position="105"/>
    </location>
</feature>
<dbReference type="EMBL" id="KP268600">
    <property type="protein sequence ID" value="AJD85833.1"/>
    <property type="molecule type" value="mRNA"/>
</dbReference>
<dbReference type="GO" id="GO:0005576">
    <property type="term" value="C:extracellular region"/>
    <property type="evidence" value="ECO:0007669"/>
    <property type="project" value="UniProtKB-SubCell"/>
</dbReference>
<dbReference type="GO" id="GO:0005179">
    <property type="term" value="F:hormone activity"/>
    <property type="evidence" value="ECO:0007669"/>
    <property type="project" value="UniProtKB-KW"/>
</dbReference>
<dbReference type="GO" id="GO:0090729">
    <property type="term" value="F:toxin activity"/>
    <property type="evidence" value="ECO:0007669"/>
    <property type="project" value="UniProtKB-KW"/>
</dbReference>
<dbReference type="GO" id="GO:0006006">
    <property type="term" value="P:glucose metabolic process"/>
    <property type="evidence" value="ECO:0007669"/>
    <property type="project" value="UniProtKB-KW"/>
</dbReference>
<dbReference type="Gene3D" id="1.10.100.10">
    <property type="entry name" value="Insulin-like"/>
    <property type="match status" value="1"/>
</dbReference>
<dbReference type="InterPro" id="IPR016179">
    <property type="entry name" value="Insulin-like"/>
</dbReference>
<dbReference type="InterPro" id="IPR036438">
    <property type="entry name" value="Insulin-like_sf"/>
</dbReference>
<dbReference type="InterPro" id="IPR022353">
    <property type="entry name" value="Insulin_CS"/>
</dbReference>
<dbReference type="Pfam" id="PF00049">
    <property type="entry name" value="Insulin"/>
    <property type="match status" value="1"/>
</dbReference>
<dbReference type="SMART" id="SM00078">
    <property type="entry name" value="IlGF"/>
    <property type="match status" value="1"/>
</dbReference>
<dbReference type="SUPFAM" id="SSF56994">
    <property type="entry name" value="Insulin-like"/>
    <property type="match status" value="1"/>
</dbReference>
<dbReference type="PROSITE" id="PS00262">
    <property type="entry name" value="INSULIN"/>
    <property type="match status" value="1"/>
</dbReference>